<dbReference type="EC" id="7.1.1.9"/>
<dbReference type="EMBL" id="M64904">
    <property type="protein sequence ID" value="AAB01470.1"/>
    <property type="status" value="ALT_SEQ"/>
    <property type="molecule type" value="Genomic_DNA"/>
</dbReference>
<dbReference type="SMR" id="P29660"/>
<dbReference type="GO" id="GO:0005743">
    <property type="term" value="C:mitochondrial inner membrane"/>
    <property type="evidence" value="ECO:0007669"/>
    <property type="project" value="UniProtKB-SubCell"/>
</dbReference>
<dbReference type="GO" id="GO:0045277">
    <property type="term" value="C:respiratory chain complex IV"/>
    <property type="evidence" value="ECO:0000250"/>
    <property type="project" value="UniProtKB"/>
</dbReference>
<dbReference type="GO" id="GO:0004129">
    <property type="term" value="F:cytochrome-c oxidase activity"/>
    <property type="evidence" value="ECO:0007669"/>
    <property type="project" value="UniProtKB-EC"/>
</dbReference>
<dbReference type="GO" id="GO:0042773">
    <property type="term" value="P:ATP synthesis coupled electron transport"/>
    <property type="evidence" value="ECO:0007669"/>
    <property type="project" value="TreeGrafter"/>
</dbReference>
<dbReference type="FunFam" id="1.10.287.90:FF:000001">
    <property type="entry name" value="Cytochrome c oxidase subunit 2"/>
    <property type="match status" value="1"/>
</dbReference>
<dbReference type="Gene3D" id="1.10.287.90">
    <property type="match status" value="1"/>
</dbReference>
<dbReference type="InterPro" id="IPR045187">
    <property type="entry name" value="CcO_II"/>
</dbReference>
<dbReference type="InterPro" id="IPR011759">
    <property type="entry name" value="Cyt_c_oxidase_su2_TM_dom"/>
</dbReference>
<dbReference type="InterPro" id="IPR036257">
    <property type="entry name" value="Cyt_c_oxidase_su2_TM_sf"/>
</dbReference>
<dbReference type="PANTHER" id="PTHR22888:SF9">
    <property type="entry name" value="CYTOCHROME C OXIDASE SUBUNIT 2"/>
    <property type="match status" value="1"/>
</dbReference>
<dbReference type="PANTHER" id="PTHR22888">
    <property type="entry name" value="CYTOCHROME C OXIDASE, SUBUNIT II"/>
    <property type="match status" value="1"/>
</dbReference>
<dbReference type="Pfam" id="PF02790">
    <property type="entry name" value="COX2_TM"/>
    <property type="match status" value="1"/>
</dbReference>
<dbReference type="SUPFAM" id="SSF81464">
    <property type="entry name" value="Cytochrome c oxidase subunit II-like, transmembrane region"/>
    <property type="match status" value="1"/>
</dbReference>
<dbReference type="PROSITE" id="PS50999">
    <property type="entry name" value="COX2_TM"/>
    <property type="match status" value="1"/>
</dbReference>
<feature type="chain" id="PRO_0000183632" description="Cytochrome c oxidase subunit 2">
    <location>
        <begin position="1"/>
        <end position="74" status="greater than"/>
    </location>
</feature>
<feature type="topological domain" description="Mitochondrial intermembrane" evidence="3">
    <location>
        <begin position="1"/>
        <end position="14"/>
    </location>
</feature>
<feature type="transmembrane region" description="Helical; Name=I" evidence="3">
    <location>
        <begin position="15"/>
        <end position="45"/>
    </location>
</feature>
<feature type="topological domain" description="Mitochondrial matrix" evidence="3">
    <location>
        <begin position="46"/>
        <end position="74" status="greater than"/>
    </location>
</feature>
<feature type="non-terminal residue">
    <location>
        <position position="74"/>
    </location>
</feature>
<keyword id="KW-0186">Copper</keyword>
<keyword id="KW-0249">Electron transport</keyword>
<keyword id="KW-0472">Membrane</keyword>
<keyword id="KW-0496">Mitochondrion</keyword>
<keyword id="KW-0999">Mitochondrion inner membrane</keyword>
<keyword id="KW-0679">Respiratory chain</keyword>
<keyword id="KW-1278">Translocase</keyword>
<keyword id="KW-0812">Transmembrane</keyword>
<keyword id="KW-1133">Transmembrane helix</keyword>
<keyword id="KW-0813">Transport</keyword>
<organism>
    <name type="scientific">Megalops atlanticus</name>
    <name type="common">Tarpon</name>
    <name type="synonym">Clupea gigantea</name>
    <dbReference type="NCBI Taxonomy" id="7932"/>
    <lineage>
        <taxon>Eukaryota</taxon>
        <taxon>Metazoa</taxon>
        <taxon>Chordata</taxon>
        <taxon>Craniata</taxon>
        <taxon>Vertebrata</taxon>
        <taxon>Euteleostomi</taxon>
        <taxon>Actinopterygii</taxon>
        <taxon>Neopterygii</taxon>
        <taxon>Teleostei</taxon>
        <taxon>Elopiformes</taxon>
        <taxon>Megalopidae</taxon>
        <taxon>Megalops</taxon>
    </lineage>
</organism>
<reference key="1">
    <citation type="journal article" date="1991" name="Mol. Biol. Evol.">
        <title>Phylogenetic relationships of neopterygian fishes, inferred from mitochondrial DNA sequences.</title>
        <authorList>
            <person name="Normark B.B."/>
            <person name="McCune A.R."/>
            <person name="Harrison R.G."/>
        </authorList>
    </citation>
    <scope>NUCLEOTIDE SEQUENCE [GENOMIC DNA]</scope>
</reference>
<sequence>MAHPSQLGLQDAASPVMEELLHFHDHALMIVFLISTLVLYIIVAMVSTKLTDKYTIDSQEIEIVWTVLPAVILI</sequence>
<accession>P29660</accession>
<gene>
    <name type="primary">mt-co2</name>
    <name type="synonym">coii</name>
    <name type="synonym">coxii</name>
    <name type="synonym">mtco2</name>
</gene>
<geneLocation type="mitochondrion"/>
<proteinExistence type="inferred from homology"/>
<comment type="function">
    <text evidence="2">Component of the cytochrome c oxidase, the last enzyme in the mitochondrial electron transport chain which drives oxidative phosphorylation. The respiratory chain contains 3 multisubunit complexes succinate dehydrogenase (complex II, CII), ubiquinol-cytochrome c oxidoreductase (cytochrome b-c1 complex, complex III, CIII) and cytochrome c oxidase (complex IV, CIV), that cooperate to transfer electrons derived from NADH and succinate to molecular oxygen, creating an electrochemical gradient over the inner membrane that drives transmembrane transport and the ATP synthase. Cytochrome c oxidase is the component of the respiratory chain that catalyzes the reduction of oxygen to water. Electrons originating from reduced cytochrome c in the intermembrane space (IMS) are transferred via the dinuclear copper A center (CU(A)) of subunit 2 and heme A of subunit 1 to the active site in subunit 1, a binuclear center (BNC) formed by heme A3 and copper B (CU(B)). The BNC reduces molecular oxygen to 2 water molecules using 4 electrons from cytochrome c in the IMS and 4 protons from the mitochondrial matrix.</text>
</comment>
<comment type="catalytic activity">
    <reaction evidence="2">
        <text>4 Fe(II)-[cytochrome c] + O2 + 8 H(+)(in) = 4 Fe(III)-[cytochrome c] + 2 H2O + 4 H(+)(out)</text>
        <dbReference type="Rhea" id="RHEA:11436"/>
        <dbReference type="Rhea" id="RHEA-COMP:10350"/>
        <dbReference type="Rhea" id="RHEA-COMP:14399"/>
        <dbReference type="ChEBI" id="CHEBI:15377"/>
        <dbReference type="ChEBI" id="CHEBI:15378"/>
        <dbReference type="ChEBI" id="CHEBI:15379"/>
        <dbReference type="ChEBI" id="CHEBI:29033"/>
        <dbReference type="ChEBI" id="CHEBI:29034"/>
        <dbReference type="EC" id="7.1.1.9"/>
    </reaction>
    <physiologicalReaction direction="left-to-right" evidence="2">
        <dbReference type="Rhea" id="RHEA:11437"/>
    </physiologicalReaction>
</comment>
<comment type="cofactor">
    <cofactor evidence="3">
        <name>Cu cation</name>
        <dbReference type="ChEBI" id="CHEBI:23378"/>
    </cofactor>
    <text evidence="3">Binds a dinuclear copper A center per subunit.</text>
</comment>
<comment type="subunit">
    <text evidence="1 3">Component of the cytochrome c oxidase (complex IV, CIV), a multisubunit enzyme composed of 14 subunits. The complex is composed of a catalytic core of 3 subunits MT-CO1, MT-CO2 and MT-CO3, encoded in the mitochondrial DNA, and 11 supernumerary subunits COX4I, COX5A, COX5B, COX6A, COX6B, COX6C, COX7A, COX7B, COX7C, COX8 and NDUFA4, which are encoded in the nuclear genome. The complex exists as a monomer or a dimer and forms supercomplexes (SCs) in the inner mitochondrial membrane with NADH-ubiquinone oxidoreductase (complex I, CI) and ubiquinol-cytochrome c oxidoreductase (cytochrome b-c1 complex, complex III, CIII), resulting in different assemblies (supercomplex SCI(1)III(2)IV(1) and megacomplex MCI(2)III(2)IV(2)) (By similarity). Found in a complex with TMEM177, COA6, COX18, COX20, SCO1 and SCO2. Interacts with TMEM177 in a COX20-dependent manner. Interacts with COX20. Interacts with COX16 (By similarity).</text>
</comment>
<comment type="subcellular location">
    <subcellularLocation>
        <location evidence="3">Mitochondrion inner membrane</location>
        <topology evidence="3">Multi-pass membrane protein</topology>
    </subcellularLocation>
</comment>
<comment type="similarity">
    <text evidence="4">Belongs to the cytochrome c oxidase subunit 2 family.</text>
</comment>
<name>COX2_MEGAT</name>
<protein>
    <recommendedName>
        <fullName>Cytochrome c oxidase subunit 2</fullName>
        <ecNumber>7.1.1.9</ecNumber>
    </recommendedName>
    <alternativeName>
        <fullName>Cytochrome c oxidase polypeptide II</fullName>
    </alternativeName>
</protein>
<evidence type="ECO:0000250" key="1">
    <source>
        <dbReference type="UniProtKB" id="P00403"/>
    </source>
</evidence>
<evidence type="ECO:0000250" key="2">
    <source>
        <dbReference type="UniProtKB" id="P00410"/>
    </source>
</evidence>
<evidence type="ECO:0000250" key="3">
    <source>
        <dbReference type="UniProtKB" id="P68530"/>
    </source>
</evidence>
<evidence type="ECO:0000305" key="4"/>